<keyword id="KW-0378">Hydrolase</keyword>
<keyword id="KW-1185">Reference proteome</keyword>
<keyword id="KW-0964">Secreted</keyword>
<keyword id="KW-0732">Signal</keyword>
<evidence type="ECO:0000255" key="1">
    <source>
        <dbReference type="HAMAP-Rule" id="MF_01906"/>
    </source>
</evidence>
<gene>
    <name type="ordered locus">Rfer_3022</name>
</gene>
<organism>
    <name type="scientific">Albidiferax ferrireducens (strain ATCC BAA-621 / DSM 15236 / T118)</name>
    <name type="common">Rhodoferax ferrireducens</name>
    <dbReference type="NCBI Taxonomy" id="338969"/>
    <lineage>
        <taxon>Bacteria</taxon>
        <taxon>Pseudomonadati</taxon>
        <taxon>Pseudomonadota</taxon>
        <taxon>Betaproteobacteria</taxon>
        <taxon>Burkholderiales</taxon>
        <taxon>Comamonadaceae</taxon>
        <taxon>Rhodoferax</taxon>
    </lineage>
</organism>
<protein>
    <recommendedName>
        <fullName evidence="1">D-(-)-3-hydroxybutyrate oligomer hydrolase</fullName>
        <shortName evidence="1">3HB-oligomer hydrolase</shortName>
        <shortName evidence="1">3HBOH</shortName>
        <ecNumber evidence="1">3.1.1.22</ecNumber>
    </recommendedName>
</protein>
<sequence>MTTTNRNNLKLTALTAAVLTLSACGGSDAVAENKNVKPAYLGEVASASYDGISDDLLTAGLGKTGLGGAAPAVVDPLSPTSAELRKLAIFNNYRAILDITAGGGYGTLYGPNVDAKGVVGASEGMIAGTEYIAYSDDGTGRQNITMMVQVPATFNPASPCIVTATSSGSRGVYGAIGSSGEWGLKNGCAVAYTDKGTGTGIHDLQNDTVNVQNGGRASATAAGKASIFTALLTSIERAAFNLATPNRFAIKHAHSQQNPEKDWGKWTLQSVEFAYFVLNQKYGDLASDGVAHLKKLTPANTIVIASSVSNGAGAALAAAEQDTQGLISGVAVAEPEVQLAPDARLSIVRGTTTLVGTGKQLLDYFTLANLLQPCAALVSPSTNVFNTVNAAIAGNRCSALKANGLITGTTTAEQAASAMAALVAAGWQPESSDLQASHYSFATLPVALTYANTYGRFGVADNLCGFSYAATGAATSATPLAPVPASAAVLATSFGTSNGVPPTAGINIVNNNSVGGPLLDAASLSVGGVQDYNIAGALCLRGLVTGTSANAVRVQQGMSEVLRSANLHGKPALIVQGRSDTLLPVAFTGRPYFGMNKIVEGANSRLSYIEVTNAQHFDAFLGFPGYANRLVPLHRYFIQAMDMMYANLKTGAALPTSQVVRTVPRGLAGTAANPITAANVPPIKAVADVADQITFANNVVTVAD</sequence>
<comment type="function">
    <text evidence="1">Participates in the degradation of poly-3-hydroxybutyrate (PHB). It works downstream of poly(3-hydroxybutyrate) depolymerase, hydrolyzing D(-)-3-hydroxybutyrate oligomers of various length (3HB-oligomers) into 3HB-monomers.</text>
</comment>
<comment type="catalytic activity">
    <reaction evidence="1">
        <text>(3R)-hydroxybutanoate dimer + H2O = 2 (R)-3-hydroxybutanoate + H(+)</text>
        <dbReference type="Rhea" id="RHEA:10172"/>
        <dbReference type="ChEBI" id="CHEBI:10979"/>
        <dbReference type="ChEBI" id="CHEBI:10983"/>
        <dbReference type="ChEBI" id="CHEBI:15377"/>
        <dbReference type="ChEBI" id="CHEBI:15378"/>
        <dbReference type="EC" id="3.1.1.22"/>
    </reaction>
</comment>
<comment type="pathway">
    <text evidence="1">Lipid metabolism; butanoate metabolism.</text>
</comment>
<comment type="subcellular location">
    <subcellularLocation>
        <location evidence="1">Secreted</location>
    </subcellularLocation>
</comment>
<comment type="similarity">
    <text evidence="1">Belongs to the D-(-)-3-hydroxybutyrate oligomer hydrolase family.</text>
</comment>
<accession>Q21U20</accession>
<proteinExistence type="inferred from homology"/>
<dbReference type="EC" id="3.1.1.22" evidence="1"/>
<dbReference type="EMBL" id="CP000267">
    <property type="protein sequence ID" value="ABD70733.1"/>
    <property type="molecule type" value="Genomic_DNA"/>
</dbReference>
<dbReference type="RefSeq" id="WP_011465299.1">
    <property type="nucleotide sequence ID" value="NC_007908.1"/>
</dbReference>
<dbReference type="STRING" id="338969.Rfer_3022"/>
<dbReference type="ESTHER" id="rhoft-hboh">
    <property type="family name" value="OHBut_olig_hydro_put"/>
</dbReference>
<dbReference type="KEGG" id="rfr:Rfer_3022"/>
<dbReference type="eggNOG" id="ENOG502Z8QU">
    <property type="taxonomic scope" value="Bacteria"/>
</dbReference>
<dbReference type="HOGENOM" id="CLU_420258_0_0_4"/>
<dbReference type="OrthoDB" id="4294477at2"/>
<dbReference type="UniPathway" id="UPA00863"/>
<dbReference type="Proteomes" id="UP000008332">
    <property type="component" value="Chromosome"/>
</dbReference>
<dbReference type="GO" id="GO:0005615">
    <property type="term" value="C:extracellular space"/>
    <property type="evidence" value="ECO:0007669"/>
    <property type="project" value="InterPro"/>
</dbReference>
<dbReference type="GO" id="GO:0047989">
    <property type="term" value="F:hydroxybutyrate-dimer hydrolase activity"/>
    <property type="evidence" value="ECO:0007669"/>
    <property type="project" value="UniProtKB-UniRule"/>
</dbReference>
<dbReference type="GO" id="GO:0019605">
    <property type="term" value="P:butyrate metabolic process"/>
    <property type="evidence" value="ECO:0007669"/>
    <property type="project" value="UniProtKB-UniRule"/>
</dbReference>
<dbReference type="HAMAP" id="MF_01906">
    <property type="entry name" value="3HBOH"/>
    <property type="match status" value="1"/>
</dbReference>
<dbReference type="InterPro" id="IPR016582">
    <property type="entry name" value="OHBut_olig_hydro_put"/>
</dbReference>
<dbReference type="Pfam" id="PF10605">
    <property type="entry name" value="3HBOH"/>
    <property type="match status" value="1"/>
</dbReference>
<dbReference type="PIRSF" id="PIRSF011409">
    <property type="entry name" value="HObutyrate_olig_hydrol"/>
    <property type="match status" value="1"/>
</dbReference>
<reference key="1">
    <citation type="submission" date="2006-02" db="EMBL/GenBank/DDBJ databases">
        <title>Complete sequence of chromosome of Rhodoferax ferrireducens DSM 15236.</title>
        <authorList>
            <person name="Copeland A."/>
            <person name="Lucas S."/>
            <person name="Lapidus A."/>
            <person name="Barry K."/>
            <person name="Detter J.C."/>
            <person name="Glavina del Rio T."/>
            <person name="Hammon N."/>
            <person name="Israni S."/>
            <person name="Pitluck S."/>
            <person name="Brettin T."/>
            <person name="Bruce D."/>
            <person name="Han C."/>
            <person name="Tapia R."/>
            <person name="Gilna P."/>
            <person name="Kiss H."/>
            <person name="Schmutz J."/>
            <person name="Larimer F."/>
            <person name="Land M."/>
            <person name="Kyrpides N."/>
            <person name="Ivanova N."/>
            <person name="Richardson P."/>
        </authorList>
    </citation>
    <scope>NUCLEOTIDE SEQUENCE [LARGE SCALE GENOMIC DNA]</scope>
    <source>
        <strain>ATCC BAA-621 / DSM 15236 / T118</strain>
    </source>
</reference>
<feature type="signal peptide" evidence="1">
    <location>
        <begin position="1"/>
        <end position="31"/>
    </location>
</feature>
<feature type="chain" id="PRO_5000110604" description="D-(-)-3-hydroxybutyrate oligomer hydrolase">
    <location>
        <begin position="32"/>
        <end position="704"/>
    </location>
</feature>
<feature type="active site" description="Charge relay system" evidence="1">
    <location>
        <position position="309"/>
    </location>
</feature>
<name>HBOH_ALBFT</name>